<accession>C5BCZ9</accession>
<evidence type="ECO:0000255" key="1">
    <source>
        <dbReference type="HAMAP-Rule" id="MF_00274"/>
    </source>
</evidence>
<evidence type="ECO:0000256" key="2">
    <source>
        <dbReference type="SAM" id="MobiDB-lite"/>
    </source>
</evidence>
<gene>
    <name type="ordered locus">NT01EI_1109</name>
</gene>
<reference key="1">
    <citation type="submission" date="2009-03" db="EMBL/GenBank/DDBJ databases">
        <title>Complete genome sequence of Edwardsiella ictaluri 93-146.</title>
        <authorList>
            <person name="Williams M.L."/>
            <person name="Gillaspy A.F."/>
            <person name="Dyer D.W."/>
            <person name="Thune R.L."/>
            <person name="Waldbieser G.C."/>
            <person name="Schuster S.C."/>
            <person name="Gipson J."/>
            <person name="Zaitshik J."/>
            <person name="Landry C."/>
            <person name="Lawrence M.L."/>
        </authorList>
    </citation>
    <scope>NUCLEOTIDE SEQUENCE [LARGE SCALE GENOMIC DNA]</scope>
    <source>
        <strain>93-146</strain>
    </source>
</reference>
<keyword id="KW-0963">Cytoplasm</keyword>
<keyword id="KW-0238">DNA-binding</keyword>
<dbReference type="EMBL" id="CP001600">
    <property type="protein sequence ID" value="ACR68320.1"/>
    <property type="molecule type" value="Genomic_DNA"/>
</dbReference>
<dbReference type="RefSeq" id="WP_015870499.1">
    <property type="nucleotide sequence ID" value="NZ_CP169062.1"/>
</dbReference>
<dbReference type="SMR" id="C5BCZ9"/>
<dbReference type="STRING" id="67780.B6E78_15910"/>
<dbReference type="KEGG" id="eic:NT01EI_1109"/>
<dbReference type="PATRIC" id="fig|634503.3.peg.1007"/>
<dbReference type="HOGENOM" id="CLU_140930_0_0_6"/>
<dbReference type="OrthoDB" id="9808738at2"/>
<dbReference type="Proteomes" id="UP000001485">
    <property type="component" value="Chromosome"/>
</dbReference>
<dbReference type="GO" id="GO:0043590">
    <property type="term" value="C:bacterial nucleoid"/>
    <property type="evidence" value="ECO:0007669"/>
    <property type="project" value="UniProtKB-UniRule"/>
</dbReference>
<dbReference type="GO" id="GO:0005829">
    <property type="term" value="C:cytosol"/>
    <property type="evidence" value="ECO:0007669"/>
    <property type="project" value="TreeGrafter"/>
</dbReference>
<dbReference type="GO" id="GO:0003677">
    <property type="term" value="F:DNA binding"/>
    <property type="evidence" value="ECO:0007669"/>
    <property type="project" value="UniProtKB-UniRule"/>
</dbReference>
<dbReference type="FunFam" id="3.30.1310.10:FF:000001">
    <property type="entry name" value="Nucleoid-associated protein YbaB"/>
    <property type="match status" value="1"/>
</dbReference>
<dbReference type="Gene3D" id="3.30.1310.10">
    <property type="entry name" value="Nucleoid-associated protein YbaB-like domain"/>
    <property type="match status" value="1"/>
</dbReference>
<dbReference type="HAMAP" id="MF_00274">
    <property type="entry name" value="DNA_YbaB_EbfC"/>
    <property type="match status" value="1"/>
</dbReference>
<dbReference type="InterPro" id="IPR036894">
    <property type="entry name" value="YbaB-like_sf"/>
</dbReference>
<dbReference type="InterPro" id="IPR004401">
    <property type="entry name" value="YbaB/EbfC"/>
</dbReference>
<dbReference type="NCBIfam" id="TIGR00103">
    <property type="entry name" value="DNA_YbaB_EbfC"/>
    <property type="match status" value="1"/>
</dbReference>
<dbReference type="PANTHER" id="PTHR33449">
    <property type="entry name" value="NUCLEOID-ASSOCIATED PROTEIN YBAB"/>
    <property type="match status" value="1"/>
</dbReference>
<dbReference type="PANTHER" id="PTHR33449:SF1">
    <property type="entry name" value="NUCLEOID-ASSOCIATED PROTEIN YBAB"/>
    <property type="match status" value="1"/>
</dbReference>
<dbReference type="Pfam" id="PF02575">
    <property type="entry name" value="YbaB_DNA_bd"/>
    <property type="match status" value="1"/>
</dbReference>
<dbReference type="PIRSF" id="PIRSF004555">
    <property type="entry name" value="UCP004555"/>
    <property type="match status" value="1"/>
</dbReference>
<dbReference type="SUPFAM" id="SSF82607">
    <property type="entry name" value="YbaB-like"/>
    <property type="match status" value="1"/>
</dbReference>
<name>Y1109_EDWI9</name>
<proteinExistence type="inferred from homology"/>
<sequence length="109" mass="12018">MFGKGGLGNLMKQAQQMQEKMQKMQEEIALVEVTGESGAGLVKVTINGAHNCRRVEIDPSLMEDDKEMLEDLVAAAFNDAARRIESEQKERMASVSSGMQLPPGFKMPF</sequence>
<organism>
    <name type="scientific">Edwardsiella ictaluri (strain 93-146)</name>
    <dbReference type="NCBI Taxonomy" id="634503"/>
    <lineage>
        <taxon>Bacteria</taxon>
        <taxon>Pseudomonadati</taxon>
        <taxon>Pseudomonadota</taxon>
        <taxon>Gammaproteobacteria</taxon>
        <taxon>Enterobacterales</taxon>
        <taxon>Hafniaceae</taxon>
        <taxon>Edwardsiella</taxon>
    </lineage>
</organism>
<feature type="chain" id="PRO_1000204767" description="Nucleoid-associated protein NT01EI_1109">
    <location>
        <begin position="1"/>
        <end position="109"/>
    </location>
</feature>
<feature type="region of interest" description="Disordered" evidence="2">
    <location>
        <begin position="89"/>
        <end position="109"/>
    </location>
</feature>
<comment type="function">
    <text evidence="1">Binds to DNA and alters its conformation. May be involved in regulation of gene expression, nucleoid organization and DNA protection.</text>
</comment>
<comment type="subunit">
    <text evidence="1">Homodimer.</text>
</comment>
<comment type="subcellular location">
    <subcellularLocation>
        <location evidence="1">Cytoplasm</location>
        <location evidence="1">Nucleoid</location>
    </subcellularLocation>
</comment>
<comment type="similarity">
    <text evidence="1">Belongs to the YbaB/EbfC family.</text>
</comment>
<protein>
    <recommendedName>
        <fullName evidence="1">Nucleoid-associated protein NT01EI_1109</fullName>
    </recommendedName>
</protein>